<accession>P13173</accession>
<evidence type="ECO:0000250" key="1">
    <source>
        <dbReference type="UniProtKB" id="P03433"/>
    </source>
</evidence>
<evidence type="ECO:0000255" key="2">
    <source>
        <dbReference type="HAMAP-Rule" id="MF_04063"/>
    </source>
</evidence>
<dbReference type="EC" id="3.1.-.-" evidence="2"/>
<dbReference type="EMBL" id="M26080">
    <property type="protein sequence ID" value="AAA43669.1"/>
    <property type="molecule type" value="Genomic_RNA"/>
</dbReference>
<dbReference type="SMR" id="P13173"/>
<dbReference type="MEROPS" id="S62.001"/>
<dbReference type="GO" id="GO:0030430">
    <property type="term" value="C:host cell cytoplasm"/>
    <property type="evidence" value="ECO:0007669"/>
    <property type="project" value="UniProtKB-SubCell"/>
</dbReference>
<dbReference type="GO" id="GO:0042025">
    <property type="term" value="C:host cell nucleus"/>
    <property type="evidence" value="ECO:0007669"/>
    <property type="project" value="UniProtKB-SubCell"/>
</dbReference>
<dbReference type="GO" id="GO:0004519">
    <property type="term" value="F:endonuclease activity"/>
    <property type="evidence" value="ECO:0007669"/>
    <property type="project" value="UniProtKB-KW"/>
</dbReference>
<dbReference type="GO" id="GO:0046872">
    <property type="term" value="F:metal ion binding"/>
    <property type="evidence" value="ECO:0007669"/>
    <property type="project" value="UniProtKB-KW"/>
</dbReference>
<dbReference type="GO" id="GO:0003723">
    <property type="term" value="F:RNA binding"/>
    <property type="evidence" value="ECO:0007669"/>
    <property type="project" value="UniProtKB-UniRule"/>
</dbReference>
<dbReference type="GO" id="GO:0075526">
    <property type="term" value="P:cap snatching"/>
    <property type="evidence" value="ECO:0007669"/>
    <property type="project" value="UniProtKB-UniRule"/>
</dbReference>
<dbReference type="GO" id="GO:0006351">
    <property type="term" value="P:DNA-templated transcription"/>
    <property type="evidence" value="ECO:0007669"/>
    <property type="project" value="UniProtKB-UniRule"/>
</dbReference>
<dbReference type="GO" id="GO:0039657">
    <property type="term" value="P:symbiont-mediated suppression of host gene expression"/>
    <property type="evidence" value="ECO:0007669"/>
    <property type="project" value="UniProtKB-KW"/>
</dbReference>
<dbReference type="GO" id="GO:0039523">
    <property type="term" value="P:symbiont-mediated suppression of host mRNA transcription via inhibition of RNA polymerase II activity"/>
    <property type="evidence" value="ECO:0007669"/>
    <property type="project" value="UniProtKB-UniRule"/>
</dbReference>
<dbReference type="GO" id="GO:0039694">
    <property type="term" value="P:viral RNA genome replication"/>
    <property type="evidence" value="ECO:0007669"/>
    <property type="project" value="InterPro"/>
</dbReference>
<dbReference type="GO" id="GO:0075523">
    <property type="term" value="P:viral translational frameshifting"/>
    <property type="evidence" value="ECO:0007669"/>
    <property type="project" value="UniProtKB-KW"/>
</dbReference>
<dbReference type="FunFam" id="3.40.91.90:FF:000001">
    <property type="entry name" value="Polymerase acidic protein"/>
    <property type="match status" value="1"/>
</dbReference>
<dbReference type="Gene3D" id="3.40.91.90">
    <property type="entry name" value="Influenza RNA-dependent RNA polymerase subunit PA, endonuclease domain"/>
    <property type="match status" value="1"/>
</dbReference>
<dbReference type="HAMAP" id="MF_04063">
    <property type="entry name" value="INFV_PA"/>
    <property type="match status" value="1"/>
</dbReference>
<dbReference type="InterPro" id="IPR037534">
    <property type="entry name" value="INFV_PA"/>
</dbReference>
<dbReference type="InterPro" id="IPR001009">
    <property type="entry name" value="PA/PA-X"/>
</dbReference>
<dbReference type="InterPro" id="IPR038372">
    <property type="entry name" value="PA/PA-X_sf"/>
</dbReference>
<dbReference type="Pfam" id="PF00603">
    <property type="entry name" value="Flu_PA"/>
    <property type="match status" value="1"/>
</dbReference>
<protein>
    <recommendedName>
        <fullName evidence="2">Polymerase acidic protein</fullName>
        <ecNumber evidence="2">3.1.-.-</ecNumber>
    </recommendedName>
    <alternativeName>
        <fullName evidence="2">RNA-directed RNA polymerase subunit P2</fullName>
    </alternativeName>
</protein>
<name>PA_I78A9</name>
<comment type="function">
    <text evidence="2">Plays an essential role in viral RNA transcription and replication by forming the heterotrimeric polymerase complex together with PB1 and PB2 subunits. The complex transcribes viral mRNAs by using a unique mechanism called cap-snatching. It consists in the hijacking and cleavage of host capped pre-mRNAs. These short capped RNAs are then used as primers for viral mRNAs. The PB2 subunit is responsible for the binding of the 5' cap of cellular pre-mRNAs which are subsequently cleaved after 10-13 nucleotides by the PA subunit that carries the endonuclease activity.</text>
</comment>
<comment type="cofactor">
    <cofactor evidence="2">
        <name>Mn(2+)</name>
        <dbReference type="ChEBI" id="CHEBI:29035"/>
    </cofactor>
    <text evidence="2">Binds 2 manganese ions per subunit.</text>
</comment>
<comment type="subunit">
    <text evidence="1 2">Influenza RNA polymerase is composed of three subunits: PB1, PB2 and PA. Interacts (via C-terminus) with PB1 (via N-terminus).</text>
</comment>
<comment type="subcellular location">
    <subcellularLocation>
        <location evidence="2">Host cytoplasm</location>
    </subcellularLocation>
    <subcellularLocation>
        <location evidence="2">Host nucleus</location>
    </subcellularLocation>
    <text evidence="1 2">PB1 and PA are transported in the host nucleus as a complex.</text>
</comment>
<comment type="alternative products">
    <event type="ribosomal frameshifting"/>
    <isoform>
        <id>P13173-1</id>
        <name>PA</name>
        <sequence type="displayed"/>
    </isoform>
    <isoform>
        <id>P0DJU9-1</id>
        <name>PA-X</name>
        <sequence type="external"/>
    </isoform>
</comment>
<comment type="PTM">
    <text evidence="1 2">Phosphorylated on serines and threonines by host kinases, including human casein kinase II.</text>
</comment>
<comment type="similarity">
    <text evidence="2">Belongs to the influenza viruses PA family.</text>
</comment>
<organismHost>
    <name type="scientific">Aves</name>
    <dbReference type="NCBI Taxonomy" id="8782"/>
</organismHost>
<organismHost>
    <name type="scientific">Cetacea</name>
    <name type="common">whales</name>
    <dbReference type="NCBI Taxonomy" id="9721"/>
</organismHost>
<organismHost>
    <name type="scientific">Homo sapiens</name>
    <name type="common">Human</name>
    <dbReference type="NCBI Taxonomy" id="9606"/>
</organismHost>
<organismHost>
    <name type="scientific">Phocidae</name>
    <name type="common">true seals</name>
    <dbReference type="NCBI Taxonomy" id="9709"/>
</organismHost>
<organismHost>
    <name type="scientific">Sus scrofa</name>
    <name type="common">Pig</name>
    <dbReference type="NCBI Taxonomy" id="9823"/>
</organismHost>
<keyword id="KW-1157">Cap snatching</keyword>
<keyword id="KW-0255">Endonuclease</keyword>
<keyword id="KW-1262">Eukaryotic host gene expression shutoff by virus</keyword>
<keyword id="KW-1191">Eukaryotic host transcription shutoff by virus</keyword>
<keyword id="KW-1035">Host cytoplasm</keyword>
<keyword id="KW-1190">Host gene expression shutoff by virus</keyword>
<keyword id="KW-1048">Host nucleus</keyword>
<keyword id="KW-0945">Host-virus interaction</keyword>
<keyword id="KW-0378">Hydrolase</keyword>
<keyword id="KW-1104">Inhibition of host RNA polymerase II by virus</keyword>
<keyword id="KW-0464">Manganese</keyword>
<keyword id="KW-0479">Metal-binding</keyword>
<keyword id="KW-0540">Nuclease</keyword>
<keyword id="KW-0597">Phosphoprotein</keyword>
<keyword id="KW-0688">Ribosomal frameshifting</keyword>
<proteinExistence type="inferred from homology"/>
<gene>
    <name evidence="2" type="primary">PA</name>
</gene>
<sequence length="716" mass="82520">MEDFVRQCFNPMIVELAEKAMKEYGEDPKIETNKFAAICTHLEICFMYSDFHFIDERGESIIVESGDPNALLKHRFEIIEGRDRTMAWTVVNSICNTTGVEKPKLLPDLYDYKENRFIEIGVTRREVHIYYLEKANKIKSEKTHIHIFSFTGEEMATKADYTLDEESRARIKTRLFTIRQEMASRGLWDSFRQSERGEETIEERFEITGTMRRLADQSLPPNFSSLENFRAYVDGFEPNGCIEGKLSQMSKEVNARIEPFLKTTPRPLRLPDGPLCSQRSKVMMMDALKLSIEDPSHEGEGIPLYDAIKCMKTFFGWKEPNIVKPHEKGINPNYLLAWKQVLAELQDIENEEKIPRTKNMKKTSQLKWALGENMAPEKVDFEDCKDVSDLKQYDSDEPESRSLASWIQSEFNKACELTDSSWIELDEIGEDIAPIEHIASIRRNYFTAEVSHCRATEYIMKGVYINTALLNASCAAMDDFQLIPMISKCRTKEGRRKTNLYGFIIKGRSHLRNDTDVVNFVSMEFSLTDPRLEPHKWEKYCVLEIGDMLLRTAIGQVSRPMFLYVRTNGTSKIKMKWGMEMRRCLLQSLQQIESMIEAESSVKEKDMTKEFFENKSETWPIGESPKGVEEGSIGKVCRTLLAKSVFNSLYASPQLEGFSAESRKLLLIVQALRDNLEPGTFDLGGLYEAIEECLINDPWVLLNASWFNSFLTHALK</sequence>
<feature type="chain" id="PRO_0000078802" description="Polymerase acidic protein">
    <location>
        <begin position="1"/>
        <end position="716"/>
    </location>
</feature>
<feature type="short sequence motif" description="Nuclear localization signal 1 (NLS1)" evidence="1 2">
    <location>
        <begin position="124"/>
        <end position="139"/>
    </location>
</feature>
<feature type="short sequence motif" description="Nuclear localization signal 2 (NLS2)" evidence="1 2">
    <location>
        <begin position="184"/>
        <end position="247"/>
    </location>
</feature>
<feature type="binding site" evidence="2">
    <location>
        <position position="41"/>
    </location>
    <ligand>
        <name>Mn(2+)</name>
        <dbReference type="ChEBI" id="CHEBI:29035"/>
        <label>1</label>
    </ligand>
</feature>
<feature type="binding site" evidence="2">
    <location>
        <position position="80"/>
    </location>
    <ligand>
        <name>Mn(2+)</name>
        <dbReference type="ChEBI" id="CHEBI:29035"/>
        <label>2</label>
    </ligand>
</feature>
<feature type="binding site" evidence="2">
    <location>
        <position position="108"/>
    </location>
    <ligand>
        <name>Mn(2+)</name>
        <dbReference type="ChEBI" id="CHEBI:29035"/>
        <label>1</label>
    </ligand>
</feature>
<feature type="binding site" evidence="2">
    <location>
        <position position="108"/>
    </location>
    <ligand>
        <name>Mn(2+)</name>
        <dbReference type="ChEBI" id="CHEBI:29035"/>
        <label>2</label>
    </ligand>
</feature>
<feature type="binding site" evidence="2">
    <location>
        <position position="119"/>
    </location>
    <ligand>
        <name>Mn(2+)</name>
        <dbReference type="ChEBI" id="CHEBI:29035"/>
        <label>1</label>
    </ligand>
</feature>
<feature type="binding site" evidence="2">
    <location>
        <position position="120"/>
    </location>
    <ligand>
        <name>Mn(2+)</name>
        <dbReference type="ChEBI" id="CHEBI:29035"/>
        <label>1</label>
    </ligand>
</feature>
<organism>
    <name type="scientific">Influenza A virus (strain A/Swine/Hong Kong/81/1978 H3N2)</name>
    <dbReference type="NCBI Taxonomy" id="384484"/>
    <lineage>
        <taxon>Viruses</taxon>
        <taxon>Riboviria</taxon>
        <taxon>Orthornavirae</taxon>
        <taxon>Negarnaviricota</taxon>
        <taxon>Polyploviricotina</taxon>
        <taxon>Insthoviricetes</taxon>
        <taxon>Articulavirales</taxon>
        <taxon>Orthomyxoviridae</taxon>
        <taxon>Alphainfluenzavirus</taxon>
        <taxon>Alphainfluenzavirus influenzae</taxon>
        <taxon>Influenza A virus</taxon>
    </lineage>
</organism>
<reference key="1">
    <citation type="journal article" date="1989" name="Virology">
        <title>Evolutionary pathways of the PA genes of influenza A viruses.</title>
        <authorList>
            <person name="Okazaki K."/>
            <person name="Kawaoka Y."/>
            <person name="Webster R.G."/>
        </authorList>
    </citation>
    <scope>NUCLEOTIDE SEQUENCE [GENOMIC RNA]</scope>
</reference>